<name>DBNL_DICDI</name>
<accession>Q557J6</accession>
<accession>Q6T3S4</accession>
<gene>
    <name type="primary">abpE-1</name>
    <name type="synonym">abp1-1</name>
    <name type="ORF">DDB_G0273447</name>
</gene>
<gene>
    <name type="primary">abpE-2</name>
    <name type="synonym">abp1-2</name>
    <name type="ORF">DDB_G0273517</name>
</gene>
<comment type="function">
    <text evidence="4">Actin-binding adapter protein. Binds to F-actin but is not involved in actin polymerization, capping or bundling. Does not bind G-actin. Controls pseudopodium number and motility in early stages of chemotactic aggregation.</text>
</comment>
<comment type="subcellular location">
    <subcellularLocation>
        <location evidence="4">Cytoplasm</location>
        <location evidence="4">Cytoskeleton</location>
    </subcellularLocation>
    <subcellularLocation>
        <location evidence="4">Cell projection</location>
        <location evidence="4">Pseudopodium</location>
    </subcellularLocation>
</comment>
<comment type="domain">
    <text>The SH3 domain mediates the control of pseudopodium number.</text>
</comment>
<comment type="similarity">
    <text evidence="5">Belongs to the ABP1 family.</text>
</comment>
<comment type="caution">
    <text evidence="5">The gene for this protein is duplicated in strains AX3 and AX4. These strains contain a duplication of a segment of 750 kb of chromosome 2 compared to the corresponding sequence in strain AX2.</text>
</comment>
<sequence>MASLDISDPDITKYIKLVQDGNPANRWIVFSYVPKSNNKIKFCDSGSGDLKELREELDDSSIRFAYIRFVINNMPKFVYIPWCGDGVNGPIKGAFSGHAIEFSKSFKPIHHQVNARSEEDIDEKAITAALNKATGASYDSGSKVQGATKGTFIPQSVSQGREAATKSNAEVKNVINKNDYNKIQESAEYWKQNQANKSEPAKPTRPEYNLSTERDDYWKQQQAEKQKQQQQQQQQQASRVNAPPPSRTVGNKFQEQVSKPTETAPPQPRPAPSKGSVLNRFPAATQQQQEPPAPSRPAAPVPSRVNKPAAPVQPVYQEPVHEEPQYEEPQYEEEQQQQYEEQPTEEQQYYQEEPQQQYEEQPTEEQQYYQEEQQQYEEQPTEEQQYYQEEQQQYEQPTEDQQYYQEEQQQYEQPAEEQYDQSGYLQAKALYDYNGENDGDLSFREGDIITILDQSDPDGWWQGSLPTGEQGFFPSNFVQQL</sequence>
<protein>
    <recommendedName>
        <fullName>Drebrin-like protein</fullName>
    </recommendedName>
    <alternativeName>
        <fullName>Actin-binding protein 1</fullName>
        <shortName>Dabp1</shortName>
    </alternativeName>
    <alternativeName>
        <fullName>Actin-binding protein E</fullName>
    </alternativeName>
</protein>
<dbReference type="EMBL" id="AY437927">
    <property type="protein sequence ID" value="AAR26472.1"/>
    <property type="molecule type" value="mRNA"/>
</dbReference>
<dbReference type="EMBL" id="AAFI02000010">
    <property type="protein sequence ID" value="EAL70678.1"/>
    <property type="molecule type" value="Genomic_DNA"/>
</dbReference>
<dbReference type="EMBL" id="AAFI02000010">
    <property type="protein sequence ID" value="EAL70713.1"/>
    <property type="molecule type" value="Genomic_DNA"/>
</dbReference>
<dbReference type="RefSeq" id="XP_644611.1">
    <property type="nucleotide sequence ID" value="XM_639519.1"/>
</dbReference>
<dbReference type="RefSeq" id="XP_644639.1">
    <property type="nucleotide sequence ID" value="XM_639547.1"/>
</dbReference>
<dbReference type="SMR" id="Q557J6"/>
<dbReference type="FunCoup" id="Q557J6">
    <property type="interactions" value="227"/>
</dbReference>
<dbReference type="STRING" id="44689.Q557J6"/>
<dbReference type="PaxDb" id="44689-DDB0201562"/>
<dbReference type="EnsemblProtists" id="EAL70678">
    <property type="protein sequence ID" value="EAL70678"/>
    <property type="gene ID" value="DDB_G0273447"/>
</dbReference>
<dbReference type="EnsemblProtists" id="EAL70713">
    <property type="protein sequence ID" value="EAL70713"/>
    <property type="gene ID" value="DDB_G0273517"/>
</dbReference>
<dbReference type="GeneID" id="8618975"/>
<dbReference type="GeneID" id="8619002"/>
<dbReference type="KEGG" id="ddi:DDB_G0273447"/>
<dbReference type="KEGG" id="ddi:DDB_G0273517"/>
<dbReference type="dictyBase" id="DDB_G0273447">
    <property type="gene designation" value="abpE-1"/>
</dbReference>
<dbReference type="dictyBase" id="DDB_G0273517">
    <property type="gene designation" value="abpE-2"/>
</dbReference>
<dbReference type="VEuPathDB" id="AmoebaDB:DDB_G0273517"/>
<dbReference type="eggNOG" id="KOG3655">
    <property type="taxonomic scope" value="Eukaryota"/>
</dbReference>
<dbReference type="HOGENOM" id="CLU_567948_0_0_1"/>
<dbReference type="InParanoid" id="Q557J6"/>
<dbReference type="OMA" id="HYASQYD"/>
<dbReference type="Reactome" id="R-DDI-6798695">
    <property type="pathway name" value="Neutrophil degranulation"/>
</dbReference>
<dbReference type="PRO" id="PR:Q557J6"/>
<dbReference type="Proteomes" id="UP000002195">
    <property type="component" value="Chromosome 2"/>
</dbReference>
<dbReference type="GO" id="GO:0031252">
    <property type="term" value="C:cell leading edge"/>
    <property type="evidence" value="ECO:0000314"/>
    <property type="project" value="dictyBase"/>
</dbReference>
<dbReference type="GO" id="GO:0030864">
    <property type="term" value="C:cortical actin cytoskeleton"/>
    <property type="evidence" value="ECO:0000314"/>
    <property type="project" value="dictyBase"/>
</dbReference>
<dbReference type="GO" id="GO:0097203">
    <property type="term" value="C:phagocytic cup lip"/>
    <property type="evidence" value="ECO:0000314"/>
    <property type="project" value="dictyBase"/>
</dbReference>
<dbReference type="GO" id="GO:0045335">
    <property type="term" value="C:phagocytic vesicle"/>
    <property type="evidence" value="ECO:0000314"/>
    <property type="project" value="dictyBase"/>
</dbReference>
<dbReference type="GO" id="GO:0031143">
    <property type="term" value="C:pseudopodium"/>
    <property type="evidence" value="ECO:0000314"/>
    <property type="project" value="dictyBase"/>
</dbReference>
<dbReference type="GO" id="GO:0030427">
    <property type="term" value="C:site of polarized growth"/>
    <property type="evidence" value="ECO:0000318"/>
    <property type="project" value="GO_Central"/>
</dbReference>
<dbReference type="GO" id="GO:0003779">
    <property type="term" value="F:actin binding"/>
    <property type="evidence" value="ECO:0000250"/>
    <property type="project" value="dictyBase"/>
</dbReference>
<dbReference type="GO" id="GO:0051015">
    <property type="term" value="F:actin filament binding"/>
    <property type="evidence" value="ECO:0000314"/>
    <property type="project" value="dictyBase"/>
</dbReference>
<dbReference type="GO" id="GO:0032037">
    <property type="term" value="F:myosin I heavy chain binding"/>
    <property type="evidence" value="ECO:0000353"/>
    <property type="project" value="dictyBase"/>
</dbReference>
<dbReference type="GO" id="GO:0005522">
    <property type="term" value="F:profilin binding"/>
    <property type="evidence" value="ECO:0000353"/>
    <property type="project" value="dictyBase"/>
</dbReference>
<dbReference type="GO" id="GO:0019901">
    <property type="term" value="F:protein kinase binding"/>
    <property type="evidence" value="ECO:0000353"/>
    <property type="project" value="dictyBase"/>
</dbReference>
<dbReference type="GO" id="GO:0051017">
    <property type="term" value="P:actin filament bundle assembly"/>
    <property type="evidence" value="ECO:0000314"/>
    <property type="project" value="dictyBase"/>
</dbReference>
<dbReference type="GO" id="GO:0031152">
    <property type="term" value="P:aggregation involved in sorocarp development"/>
    <property type="evidence" value="ECO:0000316"/>
    <property type="project" value="dictyBase"/>
</dbReference>
<dbReference type="GO" id="GO:0048870">
    <property type="term" value="P:cell motility"/>
    <property type="evidence" value="ECO:0000315"/>
    <property type="project" value="dictyBase"/>
</dbReference>
<dbReference type="GO" id="GO:0007163">
    <property type="term" value="P:establishment or maintenance of cell polarity"/>
    <property type="evidence" value="ECO:0000316"/>
    <property type="project" value="dictyBase"/>
</dbReference>
<dbReference type="GO" id="GO:0050765">
    <property type="term" value="P:negative regulation of phagocytosis"/>
    <property type="evidence" value="ECO:0000315"/>
    <property type="project" value="dictyBase"/>
</dbReference>
<dbReference type="GO" id="GO:0090382">
    <property type="term" value="P:phagosome maturation"/>
    <property type="evidence" value="ECO:0000315"/>
    <property type="project" value="dictyBase"/>
</dbReference>
<dbReference type="GO" id="GO:0031269">
    <property type="term" value="P:pseudopodium assembly"/>
    <property type="evidence" value="ECO:0000315"/>
    <property type="project" value="dictyBase"/>
</dbReference>
<dbReference type="GO" id="GO:0030833">
    <property type="term" value="P:regulation of actin filament polymerization"/>
    <property type="evidence" value="ECO:0000318"/>
    <property type="project" value="GO_Central"/>
</dbReference>
<dbReference type="CDD" id="cd11281">
    <property type="entry name" value="ADF_drebrin_like"/>
    <property type="match status" value="1"/>
</dbReference>
<dbReference type="CDD" id="cd00174">
    <property type="entry name" value="SH3"/>
    <property type="match status" value="1"/>
</dbReference>
<dbReference type="FunFam" id="3.40.20.10:FF:000122">
    <property type="entry name" value="Drebrin-like protein"/>
    <property type="match status" value="1"/>
</dbReference>
<dbReference type="FunFam" id="2.30.30.40:FF:000072">
    <property type="entry name" value="Unconventional Myosin IB"/>
    <property type="match status" value="1"/>
</dbReference>
<dbReference type="Gene3D" id="3.40.20.10">
    <property type="entry name" value="Severin"/>
    <property type="match status" value="1"/>
</dbReference>
<dbReference type="Gene3D" id="2.30.30.40">
    <property type="entry name" value="SH3 Domains"/>
    <property type="match status" value="1"/>
</dbReference>
<dbReference type="InterPro" id="IPR002108">
    <property type="entry name" value="ADF-H"/>
</dbReference>
<dbReference type="InterPro" id="IPR029006">
    <property type="entry name" value="ADF-H/Gelsolin-like_dom_sf"/>
</dbReference>
<dbReference type="InterPro" id="IPR036028">
    <property type="entry name" value="SH3-like_dom_sf"/>
</dbReference>
<dbReference type="InterPro" id="IPR001452">
    <property type="entry name" value="SH3_domain"/>
</dbReference>
<dbReference type="PANTHER" id="PTHR10829">
    <property type="entry name" value="CORTACTIN AND DREBRIN"/>
    <property type="match status" value="1"/>
</dbReference>
<dbReference type="PANTHER" id="PTHR10829:SF53">
    <property type="entry name" value="DREBRIN-LIKE PROTEIN"/>
    <property type="match status" value="1"/>
</dbReference>
<dbReference type="Pfam" id="PF00241">
    <property type="entry name" value="Cofilin_ADF"/>
    <property type="match status" value="1"/>
</dbReference>
<dbReference type="Pfam" id="PF00018">
    <property type="entry name" value="SH3_1"/>
    <property type="match status" value="1"/>
</dbReference>
<dbReference type="PRINTS" id="PR00452">
    <property type="entry name" value="SH3DOMAIN"/>
</dbReference>
<dbReference type="SMART" id="SM00102">
    <property type="entry name" value="ADF"/>
    <property type="match status" value="1"/>
</dbReference>
<dbReference type="SMART" id="SM00326">
    <property type="entry name" value="SH3"/>
    <property type="match status" value="1"/>
</dbReference>
<dbReference type="SUPFAM" id="SSF55753">
    <property type="entry name" value="Actin depolymerizing proteins"/>
    <property type="match status" value="1"/>
</dbReference>
<dbReference type="SUPFAM" id="SSF50044">
    <property type="entry name" value="SH3-domain"/>
    <property type="match status" value="1"/>
</dbReference>
<dbReference type="PROSITE" id="PS51263">
    <property type="entry name" value="ADF_H"/>
    <property type="match status" value="1"/>
</dbReference>
<dbReference type="PROSITE" id="PS50002">
    <property type="entry name" value="SH3"/>
    <property type="match status" value="1"/>
</dbReference>
<keyword id="KW-0009">Actin-binding</keyword>
<keyword id="KW-0966">Cell projection</keyword>
<keyword id="KW-0175">Coiled coil</keyword>
<keyword id="KW-0963">Cytoplasm</keyword>
<keyword id="KW-0206">Cytoskeleton</keyword>
<keyword id="KW-1185">Reference proteome</keyword>
<keyword id="KW-0728">SH3 domain</keyword>
<organism>
    <name type="scientific">Dictyostelium discoideum</name>
    <name type="common">Social amoeba</name>
    <dbReference type="NCBI Taxonomy" id="44689"/>
    <lineage>
        <taxon>Eukaryota</taxon>
        <taxon>Amoebozoa</taxon>
        <taxon>Evosea</taxon>
        <taxon>Eumycetozoa</taxon>
        <taxon>Dictyostelia</taxon>
        <taxon>Dictyosteliales</taxon>
        <taxon>Dictyosteliaceae</taxon>
        <taxon>Dictyostelium</taxon>
    </lineage>
</organism>
<feature type="chain" id="PRO_0000348228" description="Drebrin-like protein">
    <location>
        <begin position="1"/>
        <end position="481"/>
    </location>
</feature>
<feature type="domain" description="ADF-H" evidence="2">
    <location>
        <begin position="3"/>
        <end position="131"/>
    </location>
</feature>
<feature type="domain" description="SH3" evidence="1">
    <location>
        <begin position="422"/>
        <end position="481"/>
    </location>
</feature>
<feature type="region of interest" description="Disordered" evidence="3">
    <location>
        <begin position="217"/>
        <end position="423"/>
    </location>
</feature>
<feature type="compositionally biased region" description="Basic and acidic residues" evidence="3">
    <location>
        <begin position="217"/>
        <end position="227"/>
    </location>
</feature>
<feature type="compositionally biased region" description="Low complexity" evidence="3">
    <location>
        <begin position="228"/>
        <end position="237"/>
    </location>
</feature>
<feature type="compositionally biased region" description="Polar residues" evidence="3">
    <location>
        <begin position="248"/>
        <end position="261"/>
    </location>
</feature>
<feature type="compositionally biased region" description="Pro residues" evidence="3">
    <location>
        <begin position="291"/>
        <end position="300"/>
    </location>
</feature>
<feature type="compositionally biased region" description="Acidic residues" evidence="3">
    <location>
        <begin position="325"/>
        <end position="335"/>
    </location>
</feature>
<feature type="compositionally biased region" description="Low complexity" evidence="3">
    <location>
        <begin position="336"/>
        <end position="413"/>
    </location>
</feature>
<evidence type="ECO:0000255" key="1">
    <source>
        <dbReference type="PROSITE-ProRule" id="PRU00192"/>
    </source>
</evidence>
<evidence type="ECO:0000255" key="2">
    <source>
        <dbReference type="PROSITE-ProRule" id="PRU00599"/>
    </source>
</evidence>
<evidence type="ECO:0000256" key="3">
    <source>
        <dbReference type="SAM" id="MobiDB-lite"/>
    </source>
</evidence>
<evidence type="ECO:0000269" key="4">
    <source>
    </source>
</evidence>
<evidence type="ECO:0000305" key="5"/>
<proteinExistence type="evidence at transcript level"/>
<reference key="1">
    <citation type="submission" date="2003-10" db="EMBL/GenBank/DDBJ databases">
        <title>Dictyostelium Dabp1 tethers PakB to the actin cytoskeleton.</title>
        <authorList>
            <person name="de la Roche M.A."/>
            <person name="Cote G.P."/>
        </authorList>
    </citation>
    <scope>NUCLEOTIDE SEQUENCE [MRNA]</scope>
</reference>
<reference key="2">
    <citation type="journal article" date="2002" name="Nature">
        <title>Sequence and analysis of chromosome 2 of Dictyostelium discoideum.</title>
        <authorList>
            <person name="Gloeckner G."/>
            <person name="Eichinger L."/>
            <person name="Szafranski K."/>
            <person name="Pachebat J.A."/>
            <person name="Bankier A.T."/>
            <person name="Dear P.H."/>
            <person name="Lehmann R."/>
            <person name="Baumgart C."/>
            <person name="Parra G."/>
            <person name="Abril J.F."/>
            <person name="Guigo R."/>
            <person name="Kumpf K."/>
            <person name="Tunggal B."/>
            <person name="Cox E.C."/>
            <person name="Quail M.A."/>
            <person name="Platzer M."/>
            <person name="Rosenthal A."/>
            <person name="Noegel A.A."/>
        </authorList>
    </citation>
    <scope>NUCLEOTIDE SEQUENCE [LARGE SCALE GENOMIC DNA]</scope>
    <source>
        <strain>AX4</strain>
    </source>
</reference>
<reference key="3">
    <citation type="journal article" date="2005" name="Nature">
        <title>The genome of the social amoeba Dictyostelium discoideum.</title>
        <authorList>
            <person name="Eichinger L."/>
            <person name="Pachebat J.A."/>
            <person name="Gloeckner G."/>
            <person name="Rajandream M.A."/>
            <person name="Sucgang R."/>
            <person name="Berriman M."/>
            <person name="Song J."/>
            <person name="Olsen R."/>
            <person name="Szafranski K."/>
            <person name="Xu Q."/>
            <person name="Tunggal B."/>
            <person name="Kummerfeld S."/>
            <person name="Madera M."/>
            <person name="Konfortov B.A."/>
            <person name="Rivero F."/>
            <person name="Bankier A.T."/>
            <person name="Lehmann R."/>
            <person name="Hamlin N."/>
            <person name="Davies R."/>
            <person name="Gaudet P."/>
            <person name="Fey P."/>
            <person name="Pilcher K."/>
            <person name="Chen G."/>
            <person name="Saunders D."/>
            <person name="Sodergren E.J."/>
            <person name="Davis P."/>
            <person name="Kerhornou A."/>
            <person name="Nie X."/>
            <person name="Hall N."/>
            <person name="Anjard C."/>
            <person name="Hemphill L."/>
            <person name="Bason N."/>
            <person name="Farbrother P."/>
            <person name="Desany B."/>
            <person name="Just E."/>
            <person name="Morio T."/>
            <person name="Rost R."/>
            <person name="Churcher C.M."/>
            <person name="Cooper J."/>
            <person name="Haydock S."/>
            <person name="van Driessche N."/>
            <person name="Cronin A."/>
            <person name="Goodhead I."/>
            <person name="Muzny D.M."/>
            <person name="Mourier T."/>
            <person name="Pain A."/>
            <person name="Lu M."/>
            <person name="Harper D."/>
            <person name="Lindsay R."/>
            <person name="Hauser H."/>
            <person name="James K.D."/>
            <person name="Quiles M."/>
            <person name="Madan Babu M."/>
            <person name="Saito T."/>
            <person name="Buchrieser C."/>
            <person name="Wardroper A."/>
            <person name="Felder M."/>
            <person name="Thangavelu M."/>
            <person name="Johnson D."/>
            <person name="Knights A."/>
            <person name="Loulseged H."/>
            <person name="Mungall K.L."/>
            <person name="Oliver K."/>
            <person name="Price C."/>
            <person name="Quail M.A."/>
            <person name="Urushihara H."/>
            <person name="Hernandez J."/>
            <person name="Rabbinowitsch E."/>
            <person name="Steffen D."/>
            <person name="Sanders M."/>
            <person name="Ma J."/>
            <person name="Kohara Y."/>
            <person name="Sharp S."/>
            <person name="Simmonds M.N."/>
            <person name="Spiegler S."/>
            <person name="Tivey A."/>
            <person name="Sugano S."/>
            <person name="White B."/>
            <person name="Walker D."/>
            <person name="Woodward J.R."/>
            <person name="Winckler T."/>
            <person name="Tanaka Y."/>
            <person name="Shaulsky G."/>
            <person name="Schleicher M."/>
            <person name="Weinstock G.M."/>
            <person name="Rosenthal A."/>
            <person name="Cox E.C."/>
            <person name="Chisholm R.L."/>
            <person name="Gibbs R.A."/>
            <person name="Loomis W.F."/>
            <person name="Platzer M."/>
            <person name="Kay R.R."/>
            <person name="Williams J.G."/>
            <person name="Dear P.H."/>
            <person name="Noegel A.A."/>
            <person name="Barrell B.G."/>
            <person name="Kuspa A."/>
        </authorList>
    </citation>
    <scope>NUCLEOTIDE SEQUENCE [LARGE SCALE GENOMIC DNA]</scope>
    <source>
        <strain>AX4</strain>
    </source>
</reference>
<reference key="4">
    <citation type="journal article" date="2006" name="J. Cell Sci.">
        <title>Abp1 regulates pseudopodium number in chemotaxing Dictyostelium cells.</title>
        <authorList>
            <person name="Wang Y."/>
            <person name="O'Halloran T.J."/>
        </authorList>
    </citation>
    <scope>FUNCTION</scope>
    <scope>SUBCELLULAR LOCATION</scope>
</reference>